<dbReference type="PIR" id="E44007">
    <property type="entry name" value="E44007"/>
</dbReference>
<dbReference type="PDB" id="2M36">
    <property type="method" value="NMR"/>
    <property type="chains" value="A=1-37"/>
</dbReference>
<dbReference type="PDBsum" id="2M36"/>
<dbReference type="BMRB" id="P49268"/>
<dbReference type="SMR" id="P49268"/>
<dbReference type="TCDB" id="8.B.21.1.1">
    <property type="family name" value="the spider insecticidal neurotoxin cyrtautoxin (cyrautoxin) family"/>
</dbReference>
<dbReference type="ArachnoServer" id="AS000403">
    <property type="toxin name" value="mu-cyrtautoxin-As1a"/>
</dbReference>
<dbReference type="EvolutionaryTrace" id="P49268"/>
<dbReference type="GO" id="GO:0005576">
    <property type="term" value="C:extracellular region"/>
    <property type="evidence" value="ECO:0000314"/>
    <property type="project" value="UniProtKB"/>
</dbReference>
<dbReference type="GO" id="GO:0005246">
    <property type="term" value="F:calcium channel regulator activity"/>
    <property type="evidence" value="ECO:0007669"/>
    <property type="project" value="UniProtKB-KW"/>
</dbReference>
<dbReference type="GO" id="GO:0017080">
    <property type="term" value="F:sodium channel regulator activity"/>
    <property type="evidence" value="ECO:0007669"/>
    <property type="project" value="UniProtKB-KW"/>
</dbReference>
<dbReference type="GO" id="GO:0090729">
    <property type="term" value="F:toxin activity"/>
    <property type="evidence" value="ECO:0007669"/>
    <property type="project" value="UniProtKB-KW"/>
</dbReference>
<dbReference type="GO" id="GO:0044475">
    <property type="term" value="P:envenomation resulting in negative regulation of high voltage-gated calcium channel activity in another organism"/>
    <property type="evidence" value="ECO:0000314"/>
    <property type="project" value="UniProtKB"/>
</dbReference>
<dbReference type="GO" id="GO:0044476">
    <property type="term" value="P:envenomation resulting in negative regulation of low voltage-gated calcium channel activity in another organism"/>
    <property type="evidence" value="ECO:0000314"/>
    <property type="project" value="UniProtKB"/>
</dbReference>
<dbReference type="GO" id="GO:0044493">
    <property type="term" value="P:envenomation resulting in negative regulation of voltage-gated sodium channel activity in another organism"/>
    <property type="evidence" value="ECO:0000314"/>
    <property type="project" value="UniProtKB"/>
</dbReference>
<dbReference type="GO" id="GO:0044487">
    <property type="term" value="P:venom-mediated perturbation of transmission of nerve impulse in another organism"/>
    <property type="evidence" value="ECO:0000314"/>
    <property type="project" value="UniProtKB"/>
</dbReference>
<dbReference type="InterPro" id="IPR012626">
    <property type="entry name" value="Spider_insecticidal_peptide"/>
</dbReference>
<dbReference type="Pfam" id="PF08091">
    <property type="entry name" value="Toxin_21"/>
    <property type="match status" value="1"/>
</dbReference>
<keyword id="KW-0002">3D-structure</keyword>
<keyword id="KW-0108">Calcium channel impairing toxin</keyword>
<keyword id="KW-0903">Direct protein sequencing</keyword>
<keyword id="KW-1015">Disulfide bond</keyword>
<keyword id="KW-0872">Ion channel impairing toxin</keyword>
<keyword id="KW-0960">Knottin</keyword>
<keyword id="KW-0528">Neurotoxin</keyword>
<keyword id="KW-0964">Secreted</keyword>
<keyword id="KW-0800">Toxin</keyword>
<keyword id="KW-1218">Voltage-gated calcium channel impairing toxin</keyword>
<keyword id="KW-0738">Voltage-gated sodium channel impairing toxin</keyword>
<protein>
    <recommendedName>
        <fullName>Mu-cyrtautoxin-As1a</fullName>
        <shortName>Mu-CUTX-As1a</shortName>
    </recommendedName>
    <alternativeName>
        <fullName evidence="3">Aptotoxin III</fullName>
        <shortName evidence="3">Aps III</shortName>
    </alternativeName>
    <alternativeName>
        <fullName>Aptotoxin-3</fullName>
        <shortName>Aps-3</shortName>
    </alternativeName>
    <alternativeName>
        <fullName>Paralytic peptide III</fullName>
        <shortName>PP III</shortName>
    </alternativeName>
</protein>
<reference key="1">
    <citation type="journal article" date="1992" name="Toxicon">
        <title>Identification of insecticidal peptides from venom of the trap-door spider, Aptostichus schlingeri (Ctenizidae).</title>
        <authorList>
            <person name="Skinner W.S."/>
            <person name="Dennis P.A."/>
            <person name="Li J.P."/>
            <person name="Quistad G.B."/>
        </authorList>
    </citation>
    <scope>PROTEIN SEQUENCE</scope>
    <scope>SUBCELLULAR LOCATION</scope>
    <scope>BIOASSAY</scope>
    <scope>TOXIC DOSE</scope>
    <source>
        <tissue>Venom</tissue>
    </source>
</reference>
<reference key="2">
    <citation type="journal article" date="2013" name="Biochem. Pharmacol.">
        <title>The insecticidal neurotoxin Aps III is an atypical knottin peptide that potently blocks insect voltage-gated sodium channels.</title>
        <authorList>
            <person name="Bende N.S."/>
            <person name="Kang E."/>
            <person name="Herzig V."/>
            <person name="Bosmans F."/>
            <person name="Nicholson G.M."/>
            <person name="Mobli M."/>
            <person name="King G.F."/>
        </authorList>
    </citation>
    <scope>FUNCTION</scope>
    <scope>STRUCTURE BY NMR</scope>
    <scope>DISULFIDE BONDS</scope>
</reference>
<name>TXP3_APOSC</name>
<comment type="function">
    <text evidence="1 2">The recombinant mu-cyrtautoxin-As1a potently and voltage-independently blocks voltage-gated sodium channels (Nav) of insects. It acts by pluging the outer vestibule of the channel. It acts in combination with a weak (30%) voltage-independent block of insect voltage-gated calcium (Cav) channels (low-voltage and high-voltage channels). Tested on DUM neurons, it inhibits sodium currents with an IC(50) of 540 nM (and a Hill coefficient &gt;1, reflecting an incomplete block at higher concentrations). In vivo, it induces flaccid paralysis in adult Australian sheep blowfly Lucilia cuprina (PubMed:23473802). It is both paralytic and lethal, when injected into lepidopteran larvae. It is a slower acting toxin, being lethal at 24 hours, but not paralytic at 1 hour post-injection (PubMed:1440641).</text>
</comment>
<comment type="subcellular location">
    <subcellularLocation>
        <location evidence="1">Secreted</location>
    </subcellularLocation>
</comment>
<comment type="tissue specificity">
    <text evidence="5">Expressed by the venom gland.</text>
</comment>
<comment type="domain">
    <text evidence="2">The presence of a 'disulfide through disulfide knot' structurally defines this protein as a knottin.</text>
</comment>
<comment type="toxic dose">
    <text evidence="1">LD(50) is 133 pmol/g in the tobacco hornworm Manduca sexta (PubMed:1440641).</text>
</comment>
<comment type="toxic dose">
    <text evidence="1">LD(50) is more than 2.66 pmol/g against the beet armyworm Spodoptera exigua (PubMed:1440641).</text>
</comment>
<comment type="toxic dose">
    <text evidence="1 2">PD(50) is 700 +- 35 pmol/g in adult Australian sheep blowfly (Lucilia cuprina) (at 24 hours post-injection).</text>
</comment>
<comment type="miscellaneous">
    <text evidence="6">Negative results: does not modulate the activity of delayed-rectifier, 'A-type' or BKCa potassium channels.</text>
</comment>
<comment type="similarity">
    <text evidence="4">Belongs to the neurotoxin 13 (insecticidal toxin ABC) family. 01 (Aps III) subfamily.</text>
</comment>
<comment type="caution">
    <text evidence="6">No comparison between the natural toxin and the recombinant one has been done to attest that the results can be also attributed to the natural toxin (mode of action and disulfide bonds).</text>
</comment>
<organism>
    <name type="scientific">Apomastus schlingeri</name>
    <name type="common">Trap-door spider</name>
    <name type="synonym">Aptostichus schlingeri</name>
    <dbReference type="NCBI Taxonomy" id="12944"/>
    <lineage>
        <taxon>Eukaryota</taxon>
        <taxon>Metazoa</taxon>
        <taxon>Ecdysozoa</taxon>
        <taxon>Arthropoda</taxon>
        <taxon>Chelicerata</taxon>
        <taxon>Arachnida</taxon>
        <taxon>Araneae</taxon>
        <taxon>Mygalomorphae</taxon>
        <taxon>Euctenizidae</taxon>
        <taxon>Apomastus</taxon>
    </lineage>
</organism>
<accession>P49268</accession>
<proteinExistence type="evidence at protein level"/>
<sequence>CNSKGTPCTNADECCGGKCAYNVWNCIGGGCSKTCGY</sequence>
<evidence type="ECO:0000269" key="1">
    <source>
    </source>
</evidence>
<evidence type="ECO:0000269" key="2">
    <source>
    </source>
</evidence>
<evidence type="ECO:0000303" key="3">
    <source>
    </source>
</evidence>
<evidence type="ECO:0000305" key="4"/>
<evidence type="ECO:0000305" key="5">
    <source>
    </source>
</evidence>
<evidence type="ECO:0000305" key="6">
    <source>
    </source>
</evidence>
<evidence type="ECO:0000312" key="7">
    <source>
        <dbReference type="PDB" id="2M36"/>
    </source>
</evidence>
<evidence type="ECO:0007829" key="8">
    <source>
        <dbReference type="PDB" id="2M36"/>
    </source>
</evidence>
<feature type="peptide" id="PRO_0000044986" description="Mu-cyrtautoxin-As1a" evidence="1">
    <location>
        <begin position="1"/>
        <end position="37"/>
    </location>
</feature>
<feature type="disulfide bond" evidence="2 7">
    <location>
        <begin position="1"/>
        <end position="15"/>
    </location>
</feature>
<feature type="disulfide bond" evidence="2 7">
    <location>
        <begin position="8"/>
        <end position="19"/>
    </location>
</feature>
<feature type="disulfide bond" evidence="2 7">
    <location>
        <begin position="14"/>
        <end position="35"/>
    </location>
</feature>
<feature type="disulfide bond" evidence="2 7">
    <location>
        <begin position="26"/>
        <end position="31"/>
    </location>
</feature>
<feature type="strand" evidence="8">
    <location>
        <begin position="7"/>
        <end position="10"/>
    </location>
</feature>
<feature type="helix" evidence="8">
    <location>
        <begin position="11"/>
        <end position="13"/>
    </location>
</feature>
<feature type="strand" evidence="8">
    <location>
        <begin position="24"/>
        <end position="26"/>
    </location>
</feature>
<feature type="strand" evidence="8">
    <location>
        <begin position="28"/>
        <end position="30"/>
    </location>
</feature>
<feature type="strand" evidence="8">
    <location>
        <begin position="33"/>
        <end position="35"/>
    </location>
</feature>